<gene>
    <name type="primary">lppJ</name>
    <name type="ordered locus">Rv2080</name>
    <name type="ORF">MTCY49.19</name>
</gene>
<keyword id="KW-1003">Cell membrane</keyword>
<keyword id="KW-0449">Lipoprotein</keyword>
<keyword id="KW-0472">Membrane</keyword>
<keyword id="KW-0564">Palmitate</keyword>
<keyword id="KW-1185">Reference proteome</keyword>
<keyword id="KW-0732">Signal</keyword>
<organism>
    <name type="scientific">Mycobacterium tuberculosis (strain ATCC 25618 / H37Rv)</name>
    <dbReference type="NCBI Taxonomy" id="83332"/>
    <lineage>
        <taxon>Bacteria</taxon>
        <taxon>Bacillati</taxon>
        <taxon>Actinomycetota</taxon>
        <taxon>Actinomycetes</taxon>
        <taxon>Mycobacteriales</taxon>
        <taxon>Mycobacteriaceae</taxon>
        <taxon>Mycobacterium</taxon>
        <taxon>Mycobacterium tuberculosis complex</taxon>
    </lineage>
</organism>
<reference key="1">
    <citation type="journal article" date="1998" name="Nature">
        <title>Deciphering the biology of Mycobacterium tuberculosis from the complete genome sequence.</title>
        <authorList>
            <person name="Cole S.T."/>
            <person name="Brosch R."/>
            <person name="Parkhill J."/>
            <person name="Garnier T."/>
            <person name="Churcher C.M."/>
            <person name="Harris D.E."/>
            <person name="Gordon S.V."/>
            <person name="Eiglmeier K."/>
            <person name="Gas S."/>
            <person name="Barry C.E. III"/>
            <person name="Tekaia F."/>
            <person name="Badcock K."/>
            <person name="Basham D."/>
            <person name="Brown D."/>
            <person name="Chillingworth T."/>
            <person name="Connor R."/>
            <person name="Davies R.M."/>
            <person name="Devlin K."/>
            <person name="Feltwell T."/>
            <person name="Gentles S."/>
            <person name="Hamlin N."/>
            <person name="Holroyd S."/>
            <person name="Hornsby T."/>
            <person name="Jagels K."/>
            <person name="Krogh A."/>
            <person name="McLean J."/>
            <person name="Moule S."/>
            <person name="Murphy L.D."/>
            <person name="Oliver S."/>
            <person name="Osborne J."/>
            <person name="Quail M.A."/>
            <person name="Rajandream M.A."/>
            <person name="Rogers J."/>
            <person name="Rutter S."/>
            <person name="Seeger K."/>
            <person name="Skelton S."/>
            <person name="Squares S."/>
            <person name="Squares R."/>
            <person name="Sulston J.E."/>
            <person name="Taylor K."/>
            <person name="Whitehead S."/>
            <person name="Barrell B.G."/>
        </authorList>
    </citation>
    <scope>NUCLEOTIDE SEQUENCE [LARGE SCALE GENOMIC DNA]</scope>
    <source>
        <strain>ATCC 25618 / H37Rv</strain>
    </source>
</reference>
<reference key="2">
    <citation type="journal article" date="2011" name="Mol. Cell. Proteomics">
        <title>Proteogenomic analysis of Mycobacterium tuberculosis by high resolution mass spectrometry.</title>
        <authorList>
            <person name="Kelkar D.S."/>
            <person name="Kumar D."/>
            <person name="Kumar P."/>
            <person name="Balakrishnan L."/>
            <person name="Muthusamy B."/>
            <person name="Yadav A.K."/>
            <person name="Shrivastava P."/>
            <person name="Marimuthu A."/>
            <person name="Anand S."/>
            <person name="Sundaram H."/>
            <person name="Kingsbury R."/>
            <person name="Harsha H.C."/>
            <person name="Nair B."/>
            <person name="Prasad T.S."/>
            <person name="Chauhan D.S."/>
            <person name="Katoch K."/>
            <person name="Katoch V.M."/>
            <person name="Kumar P."/>
            <person name="Chaerkady R."/>
            <person name="Ramachandran S."/>
            <person name="Dash D."/>
            <person name="Pandey A."/>
        </authorList>
    </citation>
    <scope>IDENTIFICATION BY MASS SPECTROMETRY [LARGE SCALE ANALYSIS]</scope>
    <source>
        <strain>ATCC 25618 / H37Rv</strain>
    </source>
</reference>
<protein>
    <recommendedName>
        <fullName>Putative lipoprotein LppJ</fullName>
    </recommendedName>
</protein>
<evidence type="ECO:0000250" key="1"/>
<evidence type="ECO:0000255" key="2"/>
<evidence type="ECO:0000305" key="3"/>
<name>LPPJ_MYCTU</name>
<dbReference type="EMBL" id="AL123456">
    <property type="protein sequence ID" value="CCP44855.1"/>
    <property type="molecule type" value="Genomic_DNA"/>
</dbReference>
<dbReference type="PIR" id="C70766">
    <property type="entry name" value="C70766"/>
</dbReference>
<dbReference type="RefSeq" id="NP_216596.1">
    <property type="nucleotide sequence ID" value="NC_000962.3"/>
</dbReference>
<dbReference type="RefSeq" id="WP_003899161.1">
    <property type="nucleotide sequence ID" value="NZ_NVQJ01000047.1"/>
</dbReference>
<dbReference type="STRING" id="83332.Rv2080"/>
<dbReference type="PaxDb" id="83332-Rv2080"/>
<dbReference type="DNASU" id="887351"/>
<dbReference type="GeneID" id="887351"/>
<dbReference type="KEGG" id="mtu:Rv2080"/>
<dbReference type="KEGG" id="mtv:RVBD_2080"/>
<dbReference type="TubercuList" id="Rv2080"/>
<dbReference type="eggNOG" id="ENOG50305SF">
    <property type="taxonomic scope" value="Bacteria"/>
</dbReference>
<dbReference type="InParanoid" id="P9WK77"/>
<dbReference type="OrthoDB" id="4743914at2"/>
<dbReference type="Proteomes" id="UP000001584">
    <property type="component" value="Chromosome"/>
</dbReference>
<dbReference type="GO" id="GO:0005576">
    <property type="term" value="C:extracellular region"/>
    <property type="evidence" value="ECO:0007005"/>
    <property type="project" value="MTBBASE"/>
</dbReference>
<dbReference type="GO" id="GO:0005886">
    <property type="term" value="C:plasma membrane"/>
    <property type="evidence" value="ECO:0007669"/>
    <property type="project" value="UniProtKB-SubCell"/>
</dbReference>
<comment type="subcellular location">
    <subcellularLocation>
        <location evidence="3">Cell membrane</location>
        <topology evidence="3">Lipid-anchor</topology>
    </subcellularLocation>
</comment>
<proteinExistence type="evidence at protein level"/>
<sequence length="187" mass="20324">MPHSTADRRLRLTRQALLAAAVVPLLAGCALVMHKPHSAGSSNPWDDSAHPLTDDQAMAQVVEPAKQIVAAADLQAVRAGFSFTSCNDQGDPPYQGTVRMAFLLQGDHDAYFQHVRAAMLSHGWIDGPPPGQYFHGITLHKNGVTANMSLALDHSYGEMILDGECRNTTDHHHDDETTNITNQLVQP</sequence>
<accession>P9WK77</accession>
<accession>L0TBA5</accession>
<accession>Q10688</accession>
<feature type="signal peptide" evidence="2">
    <location>
        <begin position="1"/>
        <end position="28"/>
    </location>
</feature>
<feature type="chain" id="PRO_0000018108" description="Putative lipoprotein LppJ">
    <location>
        <begin position="29"/>
        <end position="187"/>
    </location>
</feature>
<feature type="lipid moiety-binding region" description="N-palmitoyl cysteine" evidence="1">
    <location>
        <position position="29"/>
    </location>
</feature>
<feature type="lipid moiety-binding region" description="S-diacylglycerol cysteine" evidence="1">
    <location>
        <position position="29"/>
    </location>
</feature>